<name>IDI_SALPB</name>
<comment type="function">
    <text evidence="1">Catalyzes the 1,3-allylic rearrangement of the homoallylic substrate isopentenyl (IPP) to its highly electrophilic allylic isomer, dimethylallyl diphosphate (DMAPP).</text>
</comment>
<comment type="catalytic activity">
    <reaction evidence="1">
        <text>isopentenyl diphosphate = dimethylallyl diphosphate</text>
        <dbReference type="Rhea" id="RHEA:23284"/>
        <dbReference type="ChEBI" id="CHEBI:57623"/>
        <dbReference type="ChEBI" id="CHEBI:128769"/>
        <dbReference type="EC" id="5.3.3.2"/>
    </reaction>
</comment>
<comment type="cofactor">
    <cofactor evidence="1">
        <name>Mg(2+)</name>
        <dbReference type="ChEBI" id="CHEBI:18420"/>
    </cofactor>
    <text evidence="1">Binds 1 Mg(2+) ion per subunit. The magnesium ion binds only when substrate is bound.</text>
</comment>
<comment type="cofactor">
    <cofactor evidence="1">
        <name>Mn(2+)</name>
        <dbReference type="ChEBI" id="CHEBI:29035"/>
    </cofactor>
    <text evidence="1">Binds 1 Mn(2+) ion per subunit.</text>
</comment>
<comment type="pathway">
    <text evidence="1">Isoprenoid biosynthesis; dimethylallyl diphosphate biosynthesis; dimethylallyl diphosphate from isopentenyl diphosphate: step 1/1.</text>
</comment>
<comment type="subunit">
    <text evidence="1">Homodimer.</text>
</comment>
<comment type="subcellular location">
    <subcellularLocation>
        <location evidence="1">Cytoplasm</location>
    </subcellularLocation>
</comment>
<comment type="similarity">
    <text evidence="1">Belongs to the IPP isomerase type 1 family.</text>
</comment>
<organism>
    <name type="scientific">Salmonella paratyphi B (strain ATCC BAA-1250 / SPB7)</name>
    <dbReference type="NCBI Taxonomy" id="1016998"/>
    <lineage>
        <taxon>Bacteria</taxon>
        <taxon>Pseudomonadati</taxon>
        <taxon>Pseudomonadota</taxon>
        <taxon>Gammaproteobacteria</taxon>
        <taxon>Enterobacterales</taxon>
        <taxon>Enterobacteriaceae</taxon>
        <taxon>Salmonella</taxon>
    </lineage>
</organism>
<reference key="1">
    <citation type="submission" date="2007-11" db="EMBL/GenBank/DDBJ databases">
        <authorList>
            <consortium name="The Salmonella enterica serovar Paratyphi B Genome Sequencing Project"/>
            <person name="McClelland M."/>
            <person name="Sanderson E.K."/>
            <person name="Porwollik S."/>
            <person name="Spieth J."/>
            <person name="Clifton W.S."/>
            <person name="Fulton R."/>
            <person name="Cordes M."/>
            <person name="Wollam A."/>
            <person name="Shah N."/>
            <person name="Pepin K."/>
            <person name="Bhonagiri V."/>
            <person name="Nash W."/>
            <person name="Johnson M."/>
            <person name="Thiruvilangam P."/>
            <person name="Wilson R."/>
        </authorList>
    </citation>
    <scope>NUCLEOTIDE SEQUENCE [LARGE SCALE GENOMIC DNA]</scope>
    <source>
        <strain>ATCC BAA-1250 / SPB7</strain>
    </source>
</reference>
<proteinExistence type="inferred from homology"/>
<feature type="chain" id="PRO_1000077744" description="Isopentenyl-diphosphate Delta-isomerase">
    <location>
        <begin position="1"/>
        <end position="181"/>
    </location>
</feature>
<feature type="domain" description="Nudix hydrolase">
    <location>
        <begin position="30"/>
        <end position="164"/>
    </location>
</feature>
<feature type="active site" evidence="1">
    <location>
        <position position="67"/>
    </location>
</feature>
<feature type="active site" evidence="1">
    <location>
        <position position="116"/>
    </location>
</feature>
<feature type="binding site" evidence="1">
    <location>
        <position position="25"/>
    </location>
    <ligand>
        <name>Mn(2+)</name>
        <dbReference type="ChEBI" id="CHEBI:29035"/>
    </ligand>
</feature>
<feature type="binding site" evidence="1">
    <location>
        <position position="32"/>
    </location>
    <ligand>
        <name>Mn(2+)</name>
        <dbReference type="ChEBI" id="CHEBI:29035"/>
    </ligand>
</feature>
<feature type="binding site" evidence="1">
    <location>
        <position position="69"/>
    </location>
    <ligand>
        <name>Mn(2+)</name>
        <dbReference type="ChEBI" id="CHEBI:29035"/>
    </ligand>
</feature>
<feature type="binding site" evidence="1">
    <location>
        <position position="87"/>
    </location>
    <ligand>
        <name>Mg(2+)</name>
        <dbReference type="ChEBI" id="CHEBI:18420"/>
    </ligand>
</feature>
<feature type="binding site" evidence="1">
    <location>
        <position position="114"/>
    </location>
    <ligand>
        <name>Mn(2+)</name>
        <dbReference type="ChEBI" id="CHEBI:29035"/>
    </ligand>
</feature>
<feature type="binding site" evidence="1">
    <location>
        <position position="116"/>
    </location>
    <ligand>
        <name>Mn(2+)</name>
        <dbReference type="ChEBI" id="CHEBI:29035"/>
    </ligand>
</feature>
<sequence>MTEEHVVLLDEQDKPSGTLEKYAAHTLNTPLHLAFSCWLFNEDGQLLVTRRSLSKKAWPGVWTNSVCGHPQQDETTEEAIIRRCRFELGVEITDLTPVYPHFSYRATDPNGIVENEVCPVFAARATSVLQVNSEEVMDYQWSEFKSVWKSLLATPWAFSPWMVMQASDEQARERLLDYCQR</sequence>
<evidence type="ECO:0000255" key="1">
    <source>
        <dbReference type="HAMAP-Rule" id="MF_00202"/>
    </source>
</evidence>
<accession>A9N3L5</accession>
<dbReference type="EC" id="5.3.3.2" evidence="1"/>
<dbReference type="EMBL" id="CP000886">
    <property type="protein sequence ID" value="ABX69118.1"/>
    <property type="molecule type" value="Genomic_DNA"/>
</dbReference>
<dbReference type="RefSeq" id="WP_000133985.1">
    <property type="nucleotide sequence ID" value="NC_010102.1"/>
</dbReference>
<dbReference type="SMR" id="A9N3L5"/>
<dbReference type="KEGG" id="spq:SPAB_03786"/>
<dbReference type="PATRIC" id="fig|1016998.12.peg.3567"/>
<dbReference type="HOGENOM" id="CLU_060552_2_0_6"/>
<dbReference type="BioCyc" id="SENT1016998:SPAB_RS15400-MONOMER"/>
<dbReference type="UniPathway" id="UPA00059">
    <property type="reaction ID" value="UER00104"/>
</dbReference>
<dbReference type="Proteomes" id="UP000008556">
    <property type="component" value="Chromosome"/>
</dbReference>
<dbReference type="GO" id="GO:0005737">
    <property type="term" value="C:cytoplasm"/>
    <property type="evidence" value="ECO:0007669"/>
    <property type="project" value="UniProtKB-SubCell"/>
</dbReference>
<dbReference type="GO" id="GO:0004452">
    <property type="term" value="F:isopentenyl-diphosphate delta-isomerase activity"/>
    <property type="evidence" value="ECO:0007669"/>
    <property type="project" value="UniProtKB-UniRule"/>
</dbReference>
<dbReference type="GO" id="GO:0046872">
    <property type="term" value="F:metal ion binding"/>
    <property type="evidence" value="ECO:0007669"/>
    <property type="project" value="UniProtKB-KW"/>
</dbReference>
<dbReference type="GO" id="GO:0050992">
    <property type="term" value="P:dimethylallyl diphosphate biosynthetic process"/>
    <property type="evidence" value="ECO:0007669"/>
    <property type="project" value="UniProtKB-UniRule"/>
</dbReference>
<dbReference type="GO" id="GO:0008299">
    <property type="term" value="P:isoprenoid biosynthetic process"/>
    <property type="evidence" value="ECO:0007669"/>
    <property type="project" value="UniProtKB-KW"/>
</dbReference>
<dbReference type="CDD" id="cd02885">
    <property type="entry name" value="NUDIX_IPP_Isomerase"/>
    <property type="match status" value="1"/>
</dbReference>
<dbReference type="FunFam" id="3.90.79.10:FF:000009">
    <property type="entry name" value="Isopentenyl-diphosphate Delta-isomerase"/>
    <property type="match status" value="1"/>
</dbReference>
<dbReference type="Gene3D" id="3.90.79.10">
    <property type="entry name" value="Nucleoside Triphosphate Pyrophosphohydrolase"/>
    <property type="match status" value="1"/>
</dbReference>
<dbReference type="HAMAP" id="MF_00202">
    <property type="entry name" value="Idi"/>
    <property type="match status" value="1"/>
</dbReference>
<dbReference type="InterPro" id="IPR056375">
    <property type="entry name" value="Idi_bact"/>
</dbReference>
<dbReference type="InterPro" id="IPR011876">
    <property type="entry name" value="IsopentenylPP_isomerase_typ1"/>
</dbReference>
<dbReference type="InterPro" id="IPR015797">
    <property type="entry name" value="NUDIX_hydrolase-like_dom_sf"/>
</dbReference>
<dbReference type="InterPro" id="IPR000086">
    <property type="entry name" value="NUDIX_hydrolase_dom"/>
</dbReference>
<dbReference type="NCBIfam" id="TIGR02150">
    <property type="entry name" value="IPP_isom_1"/>
    <property type="match status" value="1"/>
</dbReference>
<dbReference type="NCBIfam" id="NF002995">
    <property type="entry name" value="PRK03759.1"/>
    <property type="match status" value="1"/>
</dbReference>
<dbReference type="PANTHER" id="PTHR10885">
    <property type="entry name" value="ISOPENTENYL-DIPHOSPHATE DELTA-ISOMERASE"/>
    <property type="match status" value="1"/>
</dbReference>
<dbReference type="PANTHER" id="PTHR10885:SF0">
    <property type="entry name" value="ISOPENTENYL-DIPHOSPHATE DELTA-ISOMERASE"/>
    <property type="match status" value="1"/>
</dbReference>
<dbReference type="Pfam" id="PF00293">
    <property type="entry name" value="NUDIX"/>
    <property type="match status" value="1"/>
</dbReference>
<dbReference type="PIRSF" id="PIRSF018427">
    <property type="entry name" value="Isopntndiph_ism"/>
    <property type="match status" value="1"/>
</dbReference>
<dbReference type="SUPFAM" id="SSF55811">
    <property type="entry name" value="Nudix"/>
    <property type="match status" value="1"/>
</dbReference>
<dbReference type="PROSITE" id="PS51462">
    <property type="entry name" value="NUDIX"/>
    <property type="match status" value="1"/>
</dbReference>
<keyword id="KW-0963">Cytoplasm</keyword>
<keyword id="KW-0413">Isomerase</keyword>
<keyword id="KW-0414">Isoprene biosynthesis</keyword>
<keyword id="KW-0460">Magnesium</keyword>
<keyword id="KW-0464">Manganese</keyword>
<keyword id="KW-0479">Metal-binding</keyword>
<protein>
    <recommendedName>
        <fullName evidence="1">Isopentenyl-diphosphate Delta-isomerase</fullName>
        <shortName evidence="1">IPP isomerase</shortName>
        <ecNumber evidence="1">5.3.3.2</ecNumber>
    </recommendedName>
    <alternativeName>
        <fullName evidence="1">IPP:DMAPP isomerase</fullName>
    </alternativeName>
    <alternativeName>
        <fullName evidence="1">Isopentenyl pyrophosphate isomerase</fullName>
    </alternativeName>
</protein>
<gene>
    <name evidence="1" type="primary">idi</name>
    <name type="ordered locus">SPAB_03786</name>
</gene>